<accession>B4ER10</accession>
<accession>B2L226</accession>
<proteinExistence type="evidence at transcript level"/>
<organism>
    <name type="scientific">Gallus gallus</name>
    <name type="common">Chicken</name>
    <dbReference type="NCBI Taxonomy" id="9031"/>
    <lineage>
        <taxon>Eukaryota</taxon>
        <taxon>Metazoa</taxon>
        <taxon>Chordata</taxon>
        <taxon>Craniata</taxon>
        <taxon>Vertebrata</taxon>
        <taxon>Euteleostomi</taxon>
        <taxon>Archelosauria</taxon>
        <taxon>Archosauria</taxon>
        <taxon>Dinosauria</taxon>
        <taxon>Saurischia</taxon>
        <taxon>Theropoda</taxon>
        <taxon>Coelurosauria</taxon>
        <taxon>Aves</taxon>
        <taxon>Neognathae</taxon>
        <taxon>Galloanserae</taxon>
        <taxon>Galliformes</taxon>
        <taxon>Phasianidae</taxon>
        <taxon>Phasianinae</taxon>
        <taxon>Gallus</taxon>
    </lineage>
</organism>
<dbReference type="EMBL" id="EF587763">
    <property type="protein sequence ID" value="ABU82742.1"/>
    <property type="molecule type" value="mRNA"/>
</dbReference>
<dbReference type="EMBL" id="KF680102">
    <property type="protein sequence ID" value="AHF20239.1"/>
    <property type="molecule type" value="mRNA"/>
</dbReference>
<dbReference type="EMBL" id="KF680103">
    <property type="protein sequence ID" value="AHF20240.1"/>
    <property type="molecule type" value="mRNA"/>
</dbReference>
<dbReference type="EMBL" id="AM773754">
    <property type="protein sequence ID" value="CAO79598.1"/>
    <property type="molecule type" value="mRNA"/>
</dbReference>
<dbReference type="EMBL" id="EU399904">
    <property type="protein sequence ID" value="ACC68984.1"/>
    <property type="molecule type" value="mRNA"/>
</dbReference>
<dbReference type="EMBL" id="AADN03016676">
    <property type="status" value="NOT_ANNOTATED_CDS"/>
    <property type="molecule type" value="Genomic_DNA"/>
</dbReference>
<dbReference type="EMBL" id="AADN03020056">
    <property type="status" value="NOT_ANNOTATED_CDS"/>
    <property type="molecule type" value="Genomic_DNA"/>
</dbReference>
<dbReference type="RefSeq" id="NP_001121968.1">
    <property type="nucleotide sequence ID" value="NM_001128496.1"/>
</dbReference>
<dbReference type="RefSeq" id="XP_015144667.1">
    <property type="nucleotide sequence ID" value="XM_015289181.1"/>
</dbReference>
<dbReference type="SMR" id="B4ER10"/>
<dbReference type="STRING" id="9031.ENSGALP00000052417"/>
<dbReference type="PaxDb" id="9031-ENSGALP00000041975"/>
<dbReference type="Ensembl" id="ENSGALT00010028862.1">
    <property type="protein sequence ID" value="ENSGALP00010016621.1"/>
    <property type="gene ID" value="ENSGALG00010012050.1"/>
</dbReference>
<dbReference type="GeneID" id="770778"/>
<dbReference type="KEGG" id="gga:101751261"/>
<dbReference type="KEGG" id="gga:770778"/>
<dbReference type="CTD" id="770778"/>
<dbReference type="VEuPathDB" id="HostDB:LOC112532795"/>
<dbReference type="eggNOG" id="ENOG502SSDC">
    <property type="taxonomic scope" value="Eukaryota"/>
</dbReference>
<dbReference type="GeneTree" id="ENSGT00390000014310"/>
<dbReference type="HOGENOM" id="CLU_120266_0_0_1"/>
<dbReference type="InParanoid" id="B4ER10"/>
<dbReference type="OMA" id="KAWSCRP"/>
<dbReference type="OrthoDB" id="9897984at2759"/>
<dbReference type="Reactome" id="R-GGA-449836">
    <property type="pathway name" value="Other interleukin signaling"/>
</dbReference>
<dbReference type="Reactome" id="R-GGA-8854691">
    <property type="pathway name" value="Interleukin-20 family signaling"/>
</dbReference>
<dbReference type="PRO" id="PR:B4ER10"/>
<dbReference type="Proteomes" id="UP000000539">
    <property type="component" value="Chromosome 7"/>
</dbReference>
<dbReference type="GO" id="GO:0005615">
    <property type="term" value="C:extracellular space"/>
    <property type="evidence" value="ECO:0000318"/>
    <property type="project" value="GO_Central"/>
</dbReference>
<dbReference type="GO" id="GO:0005125">
    <property type="term" value="F:cytokine activity"/>
    <property type="evidence" value="ECO:0007669"/>
    <property type="project" value="UniProtKB-KW"/>
</dbReference>
<dbReference type="GO" id="GO:0005102">
    <property type="term" value="F:signaling receptor binding"/>
    <property type="evidence" value="ECO:0000318"/>
    <property type="project" value="GO_Central"/>
</dbReference>
<dbReference type="GO" id="GO:0140374">
    <property type="term" value="P:antiviral innate immune response"/>
    <property type="evidence" value="ECO:0000314"/>
    <property type="project" value="GO_Central"/>
</dbReference>
<dbReference type="GO" id="GO:0007259">
    <property type="term" value="P:cell surface receptor signaling pathway via JAK-STAT"/>
    <property type="evidence" value="ECO:0007669"/>
    <property type="project" value="InterPro"/>
</dbReference>
<dbReference type="GO" id="GO:0051607">
    <property type="term" value="P:defense response to virus"/>
    <property type="evidence" value="ECO:0000314"/>
    <property type="project" value="UniProtKB"/>
</dbReference>
<dbReference type="GO" id="GO:0045087">
    <property type="term" value="P:innate immune response"/>
    <property type="evidence" value="ECO:0000318"/>
    <property type="project" value="GO_Central"/>
</dbReference>
<dbReference type="GO" id="GO:0045071">
    <property type="term" value="P:negative regulation of viral genome replication"/>
    <property type="evidence" value="ECO:0000314"/>
    <property type="project" value="UniProtKB"/>
</dbReference>
<dbReference type="GO" id="GO:0002537">
    <property type="term" value="P:nitric oxide production involved in inflammatory response"/>
    <property type="evidence" value="ECO:0000314"/>
    <property type="project" value="GO_Central"/>
</dbReference>
<dbReference type="GO" id="GO:0050778">
    <property type="term" value="P:positive regulation of immune response"/>
    <property type="evidence" value="ECO:0007669"/>
    <property type="project" value="InterPro"/>
</dbReference>
<dbReference type="FunFam" id="1.20.1250.60:FF:000004">
    <property type="entry name" value="Interferon lambda-3"/>
    <property type="match status" value="1"/>
</dbReference>
<dbReference type="Gene3D" id="1.20.1250.60">
    <property type="entry name" value="Interferon lambda"/>
    <property type="match status" value="1"/>
</dbReference>
<dbReference type="InterPro" id="IPR038326">
    <property type="entry name" value="IFN-lambda_sf"/>
</dbReference>
<dbReference type="InterPro" id="IPR029177">
    <property type="entry name" value="INF_lambda"/>
</dbReference>
<dbReference type="PANTHER" id="PTHR31943:SF1">
    <property type="entry name" value="INTERFERON LAMBDA-2-RELATED"/>
    <property type="match status" value="1"/>
</dbReference>
<dbReference type="PANTHER" id="PTHR31943">
    <property type="entry name" value="INTERLEUKIN-28 AND 29"/>
    <property type="match status" value="1"/>
</dbReference>
<dbReference type="Pfam" id="PF15177">
    <property type="entry name" value="IL28A"/>
    <property type="match status" value="1"/>
</dbReference>
<evidence type="ECO:0000250" key="1"/>
<evidence type="ECO:0000255" key="2"/>
<evidence type="ECO:0000269" key="3">
    <source>
    </source>
</evidence>
<evidence type="ECO:0000269" key="4">
    <source>
    </source>
</evidence>
<evidence type="ECO:0000305" key="5"/>
<comment type="function">
    <text evidence="3 4">Cytokine which plays a critical role in the antiviral host defense, predominantly in the epithelial tissues. Acts as a ligand for the heterodimeric class II cytokine receptor composed of IL10RB and IFNLR1, and receptor engagement leads to the activation of the JAK/STAT signaling pathway resulting in the expression of IFN-stimulated genes (ISG), which mediate the antiviral state. Has a restricted receptor distribution and therefore restricted targets: is primarily active in epithelial cells and this cell type-selective action is because of the epithelial cell-specific expression of its receptor IFNLR1. Exhibits antiviral activity against the H5N1 influenza A virus. Induces the expression of the antiviral MX protein in epithelial-rich tissues, such as intestine, trachea and lung.</text>
</comment>
<comment type="subcellular location">
    <subcellularLocation>
        <location evidence="1">Secreted</location>
    </subcellularLocation>
</comment>
<comment type="similarity">
    <text evidence="5">Belongs to the lambda interferon family.</text>
</comment>
<sequence length="186" mass="21007">MVCYGVTIILVGTLGSLLVGAFPQVTPKKSCSLSKYQFPAPLELKAVWRMKEQFEDIMLLTNRKCNTRLFHRKWDIAELSVPDRITLVEAELDLTITVLTNPTTQRLAETCQQPLAFLTQVQEDLRDCLALEAPSHQPSGKLRHWLQKLKTAKKKETAGCLEASAILHIFQVLNDLRCAAQREDCT</sequence>
<reference key="1">
    <citation type="journal article" date="2008" name="J. Interferon Cytokine Res.">
        <title>Molecular cloning, expression, and characterization of chicken IFN-lambda.</title>
        <authorList>
            <person name="Karpala A.J."/>
            <person name="Morris K.R."/>
            <person name="Broadway M.M."/>
            <person name="McWaters P.G."/>
            <person name="O'Neil T.E."/>
            <person name="Goossens K.E."/>
            <person name="Lowenthal J.W."/>
            <person name="Bean A.G."/>
        </authorList>
    </citation>
    <scope>NUCLEOTIDE SEQUENCE [MRNA]</scope>
    <scope>FUNCTION</scope>
    <source>
        <tissue>Spleen</tissue>
    </source>
</reference>
<reference key="2">
    <citation type="journal article" date="2014" name="J. Virol.">
        <title>Antiviral activity of lambda interferon in chickens.</title>
        <authorList>
            <person name="Reuter A."/>
            <person name="Soubies S."/>
            <person name="Hartle S."/>
            <person name="Schusser B."/>
            <person name="Kaspers B."/>
            <person name="Staeheli P."/>
            <person name="Rubbenstroth D."/>
        </authorList>
    </citation>
    <scope>NUCLEOTIDE SEQUENCE [MRNA]</scope>
    <scope>FUNCTION</scope>
</reference>
<reference key="3">
    <citation type="submission" date="2007-07" db="EMBL/GenBank/DDBJ databases">
        <title>Characterisation of chicken interferon-lambda.</title>
        <authorList>
            <person name="Kaiser P."/>
            <person name="Rothwell L."/>
            <person name="Hu T.J."/>
        </authorList>
    </citation>
    <scope>NUCLEOTIDE SEQUENCE [MRNA]</scope>
</reference>
<reference key="4">
    <citation type="submission" date="2008-01" db="EMBL/GenBank/DDBJ databases">
        <authorList>
            <person name="Cao W."/>
            <person name="Chen W."/>
            <person name="Liu Y."/>
            <person name="Bu Z."/>
        </authorList>
    </citation>
    <scope>NUCLEOTIDE SEQUENCE [MRNA]</scope>
</reference>
<reference key="5">
    <citation type="journal article" date="2004" name="Nature">
        <title>Sequence and comparative analysis of the chicken genome provide unique perspectives on vertebrate evolution.</title>
        <authorList>
            <person name="Hillier L.W."/>
            <person name="Miller W."/>
            <person name="Birney E."/>
            <person name="Warren W."/>
            <person name="Hardison R.C."/>
            <person name="Ponting C.P."/>
            <person name="Bork P."/>
            <person name="Burt D.W."/>
            <person name="Groenen M.A.M."/>
            <person name="Delany M.E."/>
            <person name="Dodgson J.B."/>
            <person name="Chinwalla A.T."/>
            <person name="Cliften P.F."/>
            <person name="Clifton S.W."/>
            <person name="Delehaunty K.D."/>
            <person name="Fronick C."/>
            <person name="Fulton R.S."/>
            <person name="Graves T.A."/>
            <person name="Kremitzki C."/>
            <person name="Layman D."/>
            <person name="Magrini V."/>
            <person name="McPherson J.D."/>
            <person name="Miner T.L."/>
            <person name="Minx P."/>
            <person name="Nash W.E."/>
            <person name="Nhan M.N."/>
            <person name="Nelson J.O."/>
            <person name="Oddy L.G."/>
            <person name="Pohl C.S."/>
            <person name="Randall-Maher J."/>
            <person name="Smith S.M."/>
            <person name="Wallis J.W."/>
            <person name="Yang S.-P."/>
            <person name="Romanov M.N."/>
            <person name="Rondelli C.M."/>
            <person name="Paton B."/>
            <person name="Smith J."/>
            <person name="Morrice D."/>
            <person name="Daniels L."/>
            <person name="Tempest H.G."/>
            <person name="Robertson L."/>
            <person name="Masabanda J.S."/>
            <person name="Griffin D.K."/>
            <person name="Vignal A."/>
            <person name="Fillon V."/>
            <person name="Jacobbson L."/>
            <person name="Kerje S."/>
            <person name="Andersson L."/>
            <person name="Crooijmans R.P."/>
            <person name="Aerts J."/>
            <person name="van der Poel J.J."/>
            <person name="Ellegren H."/>
            <person name="Caldwell R.B."/>
            <person name="Hubbard S.J."/>
            <person name="Grafham D.V."/>
            <person name="Kierzek A.M."/>
            <person name="McLaren S.R."/>
            <person name="Overton I.M."/>
            <person name="Arakawa H."/>
            <person name="Beattie K.J."/>
            <person name="Bezzubov Y."/>
            <person name="Boardman P.E."/>
            <person name="Bonfield J.K."/>
            <person name="Croning M.D.R."/>
            <person name="Davies R.M."/>
            <person name="Francis M.D."/>
            <person name="Humphray S.J."/>
            <person name="Scott C.E."/>
            <person name="Taylor R.G."/>
            <person name="Tickle C."/>
            <person name="Brown W.R.A."/>
            <person name="Rogers J."/>
            <person name="Buerstedde J.-M."/>
            <person name="Wilson S.A."/>
            <person name="Stubbs L."/>
            <person name="Ovcharenko I."/>
            <person name="Gordon L."/>
            <person name="Lucas S."/>
            <person name="Miller M.M."/>
            <person name="Inoko H."/>
            <person name="Shiina T."/>
            <person name="Kaufman J."/>
            <person name="Salomonsen J."/>
            <person name="Skjoedt K."/>
            <person name="Wong G.K.-S."/>
            <person name="Wang J."/>
            <person name="Liu B."/>
            <person name="Wang J."/>
            <person name="Yu J."/>
            <person name="Yang H."/>
            <person name="Nefedov M."/>
            <person name="Koriabine M."/>
            <person name="Dejong P.J."/>
            <person name="Goodstadt L."/>
            <person name="Webber C."/>
            <person name="Dickens N.J."/>
            <person name="Letunic I."/>
            <person name="Suyama M."/>
            <person name="Torrents D."/>
            <person name="von Mering C."/>
            <person name="Zdobnov E.M."/>
            <person name="Makova K."/>
            <person name="Nekrutenko A."/>
            <person name="Elnitski L."/>
            <person name="Eswara P."/>
            <person name="King D.C."/>
            <person name="Yang S.-P."/>
            <person name="Tyekucheva S."/>
            <person name="Radakrishnan A."/>
            <person name="Harris R.S."/>
            <person name="Chiaromonte F."/>
            <person name="Taylor J."/>
            <person name="He J."/>
            <person name="Rijnkels M."/>
            <person name="Griffiths-Jones S."/>
            <person name="Ureta-Vidal A."/>
            <person name="Hoffman M.M."/>
            <person name="Severin J."/>
            <person name="Searle S.M.J."/>
            <person name="Law A.S."/>
            <person name="Speed D."/>
            <person name="Waddington D."/>
            <person name="Cheng Z."/>
            <person name="Tuzun E."/>
            <person name="Eichler E."/>
            <person name="Bao Z."/>
            <person name="Flicek P."/>
            <person name="Shteynberg D.D."/>
            <person name="Brent M.R."/>
            <person name="Bye J.M."/>
            <person name="Huckle E.J."/>
            <person name="Chatterji S."/>
            <person name="Dewey C."/>
            <person name="Pachter L."/>
            <person name="Kouranov A."/>
            <person name="Mourelatos Z."/>
            <person name="Hatzigeorgiou A.G."/>
            <person name="Paterson A.H."/>
            <person name="Ivarie R."/>
            <person name="Brandstrom M."/>
            <person name="Axelsson E."/>
            <person name="Backstrom N."/>
            <person name="Berlin S."/>
            <person name="Webster M.T."/>
            <person name="Pourquie O."/>
            <person name="Reymond A."/>
            <person name="Ucla C."/>
            <person name="Antonarakis S.E."/>
            <person name="Long M."/>
            <person name="Emerson J.J."/>
            <person name="Betran E."/>
            <person name="Dupanloup I."/>
            <person name="Kaessmann H."/>
            <person name="Hinrichs A.S."/>
            <person name="Bejerano G."/>
            <person name="Furey T.S."/>
            <person name="Harte R.A."/>
            <person name="Raney B."/>
            <person name="Siepel A."/>
            <person name="Kent W.J."/>
            <person name="Haussler D."/>
            <person name="Eyras E."/>
            <person name="Castelo R."/>
            <person name="Abril J.F."/>
            <person name="Castellano S."/>
            <person name="Camara F."/>
            <person name="Parra G."/>
            <person name="Guigo R."/>
            <person name="Bourque G."/>
            <person name="Tesler G."/>
            <person name="Pevzner P.A."/>
            <person name="Smit A."/>
            <person name="Fulton L.A."/>
            <person name="Mardis E.R."/>
            <person name="Wilson R.K."/>
        </authorList>
    </citation>
    <scope>NUCLEOTIDE SEQUENCE [LARGE SCALE GENOMIC DNA]</scope>
    <source>
        <strain>Red jungle fowl</strain>
    </source>
</reference>
<reference key="6">
    <citation type="journal article" date="2013" name="Dev. Comp. Immunol.">
        <title>Chicken interferons, their receptors and interferon-stimulated genes.</title>
        <authorList>
            <person name="Goossens K.E."/>
            <person name="Ward A.C."/>
            <person name="Lowenthal J.W."/>
            <person name="Bean A.G."/>
        </authorList>
    </citation>
    <scope>REVIEW</scope>
</reference>
<protein>
    <recommendedName>
        <fullName>Interferon lambda-3</fullName>
        <shortName>IFN-lambda-3</shortName>
    </recommendedName>
    <alternativeName>
        <fullName>Interleukin-28B</fullName>
        <shortName>IL-28B</shortName>
    </alternativeName>
</protein>
<feature type="signal peptide" evidence="2">
    <location>
        <begin position="1"/>
        <end position="21"/>
    </location>
</feature>
<feature type="chain" id="PRO_0000429980" description="Interferon lambda-3">
    <location>
        <begin position="22"/>
        <end position="186"/>
    </location>
</feature>
<feature type="disulfide bond" evidence="1">
    <location>
        <begin position="31"/>
        <end position="128"/>
    </location>
</feature>
<feature type="disulfide bond" evidence="1">
    <location>
        <begin position="65"/>
        <end position="160"/>
    </location>
</feature>
<feature type="disulfide bond" evidence="1">
    <location>
        <begin position="178"/>
        <end position="185"/>
    </location>
</feature>
<feature type="sequence conflict" description="In Ref. 1; ABU82742, 2; AHF20239 and 4; ACC68984." evidence="5" ref="1 2 4">
    <original>K</original>
    <variation>E</variation>
    <location>
        <position position="150"/>
    </location>
</feature>
<gene>
    <name type="primary">IFNL3</name>
    <name type="synonym">IFNL</name>
    <name type="synonym">IL28</name>
    <name type="synonym">IL28B</name>
</gene>
<name>IFNL3_CHICK</name>
<keyword id="KW-0051">Antiviral defense</keyword>
<keyword id="KW-0202">Cytokine</keyword>
<keyword id="KW-1015">Disulfide bond</keyword>
<keyword id="KW-1185">Reference proteome</keyword>
<keyword id="KW-0964">Secreted</keyword>
<keyword id="KW-0732">Signal</keyword>